<organism>
    <name type="scientific">Escherichia coli O6:H1 (strain CFT073 / ATCC 700928 / UPEC)</name>
    <dbReference type="NCBI Taxonomy" id="199310"/>
    <lineage>
        <taxon>Bacteria</taxon>
        <taxon>Pseudomonadati</taxon>
        <taxon>Pseudomonadota</taxon>
        <taxon>Gammaproteobacteria</taxon>
        <taxon>Enterobacterales</taxon>
        <taxon>Enterobacteriaceae</taxon>
        <taxon>Escherichia</taxon>
    </lineage>
</organism>
<keyword id="KW-0249">Electron transport</keyword>
<keyword id="KW-0274">FAD</keyword>
<keyword id="KW-0285">Flavoprotein</keyword>
<keyword id="KW-1185">Reference proteome</keyword>
<keyword id="KW-0813">Transport</keyword>
<comment type="function">
    <text evidence="1">Required for anaerobic carnitine reduction. May bring reductant to CaiA (By similarity).</text>
</comment>
<comment type="pathway">
    <text>Amine and polyamine metabolism; carnitine metabolism.</text>
</comment>
<comment type="subunit">
    <text evidence="1">Heterodimer of FixA and FixB.</text>
</comment>
<comment type="similarity">
    <text evidence="3">Belongs to the ETF alpha-subunit/FixB family.</text>
</comment>
<comment type="caution">
    <text evidence="3">When this sequence was assembled, the third base of codon 137 was missed, generating two ORFs instead of one.</text>
</comment>
<name>FIXB_ECOL6</name>
<dbReference type="EMBL" id="AE014075">
    <property type="status" value="NOT_ANNOTATED_CDS"/>
    <property type="molecule type" value="Genomic_DNA"/>
</dbReference>
<dbReference type="RefSeq" id="WP_001091509.1">
    <property type="nucleotide sequence ID" value="NZ_CP051263.1"/>
</dbReference>
<dbReference type="SMR" id="P59674"/>
<dbReference type="UniPathway" id="UPA00117"/>
<dbReference type="Proteomes" id="UP000001410">
    <property type="component" value="Chromosome"/>
</dbReference>
<dbReference type="GO" id="GO:0009055">
    <property type="term" value="F:electron transfer activity"/>
    <property type="evidence" value="ECO:0007669"/>
    <property type="project" value="InterPro"/>
</dbReference>
<dbReference type="GO" id="GO:0050660">
    <property type="term" value="F:flavin adenine dinucleotide binding"/>
    <property type="evidence" value="ECO:0007669"/>
    <property type="project" value="InterPro"/>
</dbReference>
<dbReference type="GO" id="GO:0009437">
    <property type="term" value="P:carnitine metabolic process"/>
    <property type="evidence" value="ECO:0007669"/>
    <property type="project" value="UniProtKB-UniRule"/>
</dbReference>
<dbReference type="GO" id="GO:0033539">
    <property type="term" value="P:fatty acid beta-oxidation using acyl-CoA dehydrogenase"/>
    <property type="evidence" value="ECO:0007669"/>
    <property type="project" value="TreeGrafter"/>
</dbReference>
<dbReference type="FunFam" id="3.40.50.1220:FF:000004">
    <property type="entry name" value="Electron transfer flavoprotein"/>
    <property type="match status" value="1"/>
</dbReference>
<dbReference type="FunFam" id="3.40.50.620:FF:000067">
    <property type="entry name" value="Protein FixB"/>
    <property type="match status" value="1"/>
</dbReference>
<dbReference type="Gene3D" id="3.40.50.620">
    <property type="entry name" value="HUPs"/>
    <property type="match status" value="1"/>
</dbReference>
<dbReference type="Gene3D" id="3.40.50.1220">
    <property type="entry name" value="TPP-binding domain"/>
    <property type="match status" value="1"/>
</dbReference>
<dbReference type="HAMAP" id="MF_01056">
    <property type="entry name" value="FixB"/>
    <property type="match status" value="1"/>
</dbReference>
<dbReference type="InterPro" id="IPR029035">
    <property type="entry name" value="DHS-like_NAD/FAD-binding_dom"/>
</dbReference>
<dbReference type="InterPro" id="IPR014730">
    <property type="entry name" value="ETF_a/b_N"/>
</dbReference>
<dbReference type="InterPro" id="IPR001308">
    <property type="entry name" value="ETF_a/FixB"/>
</dbReference>
<dbReference type="InterPro" id="IPR014731">
    <property type="entry name" value="ETF_asu_C"/>
</dbReference>
<dbReference type="InterPro" id="IPR018206">
    <property type="entry name" value="ETF_asu_C_CS"/>
</dbReference>
<dbReference type="InterPro" id="IPR023461">
    <property type="entry name" value="FixB"/>
</dbReference>
<dbReference type="InterPro" id="IPR014729">
    <property type="entry name" value="Rossmann-like_a/b/a_fold"/>
</dbReference>
<dbReference type="NCBIfam" id="NF002889">
    <property type="entry name" value="PRK03363.1"/>
    <property type="match status" value="1"/>
</dbReference>
<dbReference type="PANTHER" id="PTHR43153">
    <property type="entry name" value="ELECTRON TRANSFER FLAVOPROTEIN ALPHA"/>
    <property type="match status" value="1"/>
</dbReference>
<dbReference type="PANTHER" id="PTHR43153:SF5">
    <property type="entry name" value="PROTEIN FIXB-RELATED"/>
    <property type="match status" value="1"/>
</dbReference>
<dbReference type="Pfam" id="PF01012">
    <property type="entry name" value="ETF"/>
    <property type="match status" value="1"/>
</dbReference>
<dbReference type="Pfam" id="PF00766">
    <property type="entry name" value="ETF_alpha"/>
    <property type="match status" value="1"/>
</dbReference>
<dbReference type="PIRSF" id="PIRSF000089">
    <property type="entry name" value="Electra_flavoP_a"/>
    <property type="match status" value="1"/>
</dbReference>
<dbReference type="SMART" id="SM00893">
    <property type="entry name" value="ETF"/>
    <property type="match status" value="1"/>
</dbReference>
<dbReference type="SUPFAM" id="SSF52402">
    <property type="entry name" value="Adenine nucleotide alpha hydrolases-like"/>
    <property type="match status" value="1"/>
</dbReference>
<dbReference type="SUPFAM" id="SSF52467">
    <property type="entry name" value="DHS-like NAD/FAD-binding domain"/>
    <property type="match status" value="1"/>
</dbReference>
<dbReference type="PROSITE" id="PS00696">
    <property type="entry name" value="ETF_ALPHA"/>
    <property type="match status" value="1"/>
</dbReference>
<reference key="1">
    <citation type="journal article" date="2002" name="Proc. Natl. Acad. Sci. U.S.A.">
        <title>Extensive mosaic structure revealed by the complete genome sequence of uropathogenic Escherichia coli.</title>
        <authorList>
            <person name="Welch R.A."/>
            <person name="Burland V."/>
            <person name="Plunkett G. III"/>
            <person name="Redford P."/>
            <person name="Roesch P."/>
            <person name="Rasko D."/>
            <person name="Buckles E.L."/>
            <person name="Liou S.-R."/>
            <person name="Boutin A."/>
            <person name="Hackett J."/>
            <person name="Stroud D."/>
            <person name="Mayhew G.F."/>
            <person name="Rose D.J."/>
            <person name="Zhou S."/>
            <person name="Schwartz D.C."/>
            <person name="Perna N.T."/>
            <person name="Mobley H.L.T."/>
            <person name="Donnenberg M.S."/>
            <person name="Blattner F.R."/>
        </authorList>
    </citation>
    <scope>NUCLEOTIDE SEQUENCE [LARGE SCALE GENOMIC DNA]</scope>
    <source>
        <strain>CFT073 / ATCC 700928 / UPEC</strain>
    </source>
</reference>
<reference key="2">
    <citation type="unpublished observations" date="2003-04">
        <authorList>
            <person name="Plunkett G. III"/>
        </authorList>
    </citation>
    <scope>SEQUENCE REVISION</scope>
</reference>
<evidence type="ECO:0000250" key="1"/>
<evidence type="ECO:0000255" key="2"/>
<evidence type="ECO:0000305" key="3"/>
<protein>
    <recommendedName>
        <fullName>Protein FixB</fullName>
    </recommendedName>
</protein>
<proteinExistence type="inferred from homology"/>
<accession>P59674</accession>
<sequence length="313" mass="33512">MNTFSQVWVFSDTPSRLPELMNGAQALANQINTFVLNDADGAQAIQLGANHVWKLSGKPDDRMIEDYADVMADTIRQHGADGLVLLPNTRRGKLLAAKLGYRLNAAVSNDASAVSVQDGKATVKHMVYGGLAIGEERIATPYAVLTISSGTFDVAQPDASRTGETHTVEWQAPAVAITRTATQARQSNSVDLDKARLVVSVGRGIGSKENIALAEQLCKAIGAELACSRPVAENEKWMEHERYVGISNLMLKPELYLAVGISGQIQHMVGANASQTIFAINKDKNAPIFQFADYGIVGDAVKILPALTAALAR</sequence>
<gene>
    <name type="primary">fixB</name>
    <name type="ordered locus">c0051/c0052</name>
</gene>
<feature type="chain" id="PRO_0000167862" description="Protein FixB">
    <location>
        <begin position="1"/>
        <end position="313"/>
    </location>
</feature>
<feature type="binding site" evidence="2">
    <location>
        <begin position="255"/>
        <end position="283"/>
    </location>
    <ligand>
        <name>FAD</name>
        <dbReference type="ChEBI" id="CHEBI:57692"/>
    </ligand>
</feature>